<feature type="chain" id="PRO_0000091728" description="3-hydroxyacyl-[acyl-carrier-protein] dehydratase FabZ">
    <location>
        <begin position="1"/>
        <end position="151"/>
    </location>
</feature>
<feature type="active site" evidence="1">
    <location>
        <position position="54"/>
    </location>
</feature>
<dbReference type="EC" id="4.2.1.59"/>
<dbReference type="EMBL" id="AE005674">
    <property type="protein sequence ID" value="AAN41832.2"/>
    <property type="molecule type" value="Genomic_DNA"/>
</dbReference>
<dbReference type="EMBL" id="AE014073">
    <property type="protein sequence ID" value="AAP15713.1"/>
    <property type="molecule type" value="Genomic_DNA"/>
</dbReference>
<dbReference type="RefSeq" id="NP_706125.2">
    <property type="nucleotide sequence ID" value="NC_004337.2"/>
</dbReference>
<dbReference type="RefSeq" id="WP_000210739.1">
    <property type="nucleotide sequence ID" value="NZ_WPGW01000006.1"/>
</dbReference>
<dbReference type="SMR" id="P0A6Q9"/>
<dbReference type="STRING" id="198214.SF0170"/>
<dbReference type="PaxDb" id="198214-SF0170"/>
<dbReference type="GeneID" id="1024429"/>
<dbReference type="GeneID" id="93777245"/>
<dbReference type="KEGG" id="sfl:SF0170"/>
<dbReference type="KEGG" id="sfx:S0173"/>
<dbReference type="PATRIC" id="fig|198214.7.peg.192"/>
<dbReference type="HOGENOM" id="CLU_078912_1_0_6"/>
<dbReference type="Proteomes" id="UP000001006">
    <property type="component" value="Chromosome"/>
</dbReference>
<dbReference type="Proteomes" id="UP000002673">
    <property type="component" value="Chromosome"/>
</dbReference>
<dbReference type="GO" id="GO:0005737">
    <property type="term" value="C:cytoplasm"/>
    <property type="evidence" value="ECO:0007669"/>
    <property type="project" value="UniProtKB-SubCell"/>
</dbReference>
<dbReference type="GO" id="GO:0016020">
    <property type="term" value="C:membrane"/>
    <property type="evidence" value="ECO:0007669"/>
    <property type="project" value="GOC"/>
</dbReference>
<dbReference type="GO" id="GO:0019171">
    <property type="term" value="F:(3R)-hydroxyacyl-[acyl-carrier-protein] dehydratase activity"/>
    <property type="evidence" value="ECO:0007669"/>
    <property type="project" value="UniProtKB-EC"/>
</dbReference>
<dbReference type="GO" id="GO:0006633">
    <property type="term" value="P:fatty acid biosynthetic process"/>
    <property type="evidence" value="ECO:0007669"/>
    <property type="project" value="UniProtKB-UniRule"/>
</dbReference>
<dbReference type="GO" id="GO:0009245">
    <property type="term" value="P:lipid A biosynthetic process"/>
    <property type="evidence" value="ECO:0007669"/>
    <property type="project" value="UniProtKB-UniRule"/>
</dbReference>
<dbReference type="CDD" id="cd01288">
    <property type="entry name" value="FabZ"/>
    <property type="match status" value="1"/>
</dbReference>
<dbReference type="FunFam" id="3.10.129.10:FF:000001">
    <property type="entry name" value="3-hydroxyacyl-[acyl-carrier-protein] dehydratase FabZ"/>
    <property type="match status" value="1"/>
</dbReference>
<dbReference type="Gene3D" id="3.10.129.10">
    <property type="entry name" value="Hotdog Thioesterase"/>
    <property type="match status" value="1"/>
</dbReference>
<dbReference type="HAMAP" id="MF_00406">
    <property type="entry name" value="FabZ"/>
    <property type="match status" value="1"/>
</dbReference>
<dbReference type="InterPro" id="IPR013114">
    <property type="entry name" value="FabA_FabZ"/>
</dbReference>
<dbReference type="InterPro" id="IPR010084">
    <property type="entry name" value="FabZ"/>
</dbReference>
<dbReference type="InterPro" id="IPR029069">
    <property type="entry name" value="HotDog_dom_sf"/>
</dbReference>
<dbReference type="NCBIfam" id="TIGR01750">
    <property type="entry name" value="fabZ"/>
    <property type="match status" value="1"/>
</dbReference>
<dbReference type="NCBIfam" id="NF000582">
    <property type="entry name" value="PRK00006.1"/>
    <property type="match status" value="1"/>
</dbReference>
<dbReference type="PANTHER" id="PTHR30272">
    <property type="entry name" value="3-HYDROXYACYL-[ACYL-CARRIER-PROTEIN] DEHYDRATASE"/>
    <property type="match status" value="1"/>
</dbReference>
<dbReference type="PANTHER" id="PTHR30272:SF1">
    <property type="entry name" value="3-HYDROXYACYL-[ACYL-CARRIER-PROTEIN] DEHYDRATASE"/>
    <property type="match status" value="1"/>
</dbReference>
<dbReference type="Pfam" id="PF07977">
    <property type="entry name" value="FabA"/>
    <property type="match status" value="1"/>
</dbReference>
<dbReference type="SUPFAM" id="SSF54637">
    <property type="entry name" value="Thioesterase/thiol ester dehydrase-isomerase"/>
    <property type="match status" value="1"/>
</dbReference>
<proteinExistence type="inferred from homology"/>
<organism>
    <name type="scientific">Shigella flexneri</name>
    <dbReference type="NCBI Taxonomy" id="623"/>
    <lineage>
        <taxon>Bacteria</taxon>
        <taxon>Pseudomonadati</taxon>
        <taxon>Pseudomonadota</taxon>
        <taxon>Gammaproteobacteria</taxon>
        <taxon>Enterobacterales</taxon>
        <taxon>Enterobacteriaceae</taxon>
        <taxon>Shigella</taxon>
    </lineage>
</organism>
<sequence>MTTNTHTLQIEEILELLPHRFPFLLVDRVLDFEEGRFLRAVKNVSVNEPFFQGHFPGKPIFPGVLILEAMAQATGILAFKSVGKLEPGELYYFAGIDEARFKRPVVPGDQMIMEVTFEKTRRGLTRFKGVALVDGKVVCEATMMCARSREA</sequence>
<gene>
    <name type="primary">fabZ</name>
    <name type="ordered locus">SF0170</name>
    <name type="ordered locus">S0173</name>
</gene>
<accession>P0A6Q9</accession>
<accession>P21774</accession>
<keyword id="KW-0963">Cytoplasm</keyword>
<keyword id="KW-0441">Lipid A biosynthesis</keyword>
<keyword id="KW-0444">Lipid biosynthesis</keyword>
<keyword id="KW-0443">Lipid metabolism</keyword>
<keyword id="KW-0456">Lyase</keyword>
<keyword id="KW-1185">Reference proteome</keyword>
<reference key="1">
    <citation type="journal article" date="2002" name="Nucleic Acids Res.">
        <title>Genome sequence of Shigella flexneri 2a: insights into pathogenicity through comparison with genomes of Escherichia coli K12 and O157.</title>
        <authorList>
            <person name="Jin Q."/>
            <person name="Yuan Z."/>
            <person name="Xu J."/>
            <person name="Wang Y."/>
            <person name="Shen Y."/>
            <person name="Lu W."/>
            <person name="Wang J."/>
            <person name="Liu H."/>
            <person name="Yang J."/>
            <person name="Yang F."/>
            <person name="Zhang X."/>
            <person name="Zhang J."/>
            <person name="Yang G."/>
            <person name="Wu H."/>
            <person name="Qu D."/>
            <person name="Dong J."/>
            <person name="Sun L."/>
            <person name="Xue Y."/>
            <person name="Zhao A."/>
            <person name="Gao Y."/>
            <person name="Zhu J."/>
            <person name="Kan B."/>
            <person name="Ding K."/>
            <person name="Chen S."/>
            <person name="Cheng H."/>
            <person name="Yao Z."/>
            <person name="He B."/>
            <person name="Chen R."/>
            <person name="Ma D."/>
            <person name="Qiang B."/>
            <person name="Wen Y."/>
            <person name="Hou Y."/>
            <person name="Yu J."/>
        </authorList>
    </citation>
    <scope>NUCLEOTIDE SEQUENCE [LARGE SCALE GENOMIC DNA]</scope>
    <source>
        <strain>301 / Serotype 2a</strain>
    </source>
</reference>
<reference key="2">
    <citation type="journal article" date="2003" name="Infect. Immun.">
        <title>Complete genome sequence and comparative genomics of Shigella flexneri serotype 2a strain 2457T.</title>
        <authorList>
            <person name="Wei J."/>
            <person name="Goldberg M.B."/>
            <person name="Burland V."/>
            <person name="Venkatesan M.M."/>
            <person name="Deng W."/>
            <person name="Fournier G."/>
            <person name="Mayhew G.F."/>
            <person name="Plunkett G. III"/>
            <person name="Rose D.J."/>
            <person name="Darling A."/>
            <person name="Mau B."/>
            <person name="Perna N.T."/>
            <person name="Payne S.M."/>
            <person name="Runyen-Janecky L.J."/>
            <person name="Zhou S."/>
            <person name="Schwartz D.C."/>
            <person name="Blattner F.R."/>
        </authorList>
    </citation>
    <scope>NUCLEOTIDE SEQUENCE [LARGE SCALE GENOMIC DNA]</scope>
    <source>
        <strain>ATCC 700930 / 2457T / Serotype 2a</strain>
    </source>
</reference>
<evidence type="ECO:0000250" key="1"/>
<evidence type="ECO:0000305" key="2"/>
<comment type="function">
    <text evidence="1">Involved in unsaturated fatty acids biosynthesis. Catalyzes the dehydration of short chain beta-hydroxyacyl-ACPs and long chain saturated and unsaturated beta-hydroxyacyl-ACPs (By similarity).</text>
</comment>
<comment type="catalytic activity">
    <reaction>
        <text>a (3R)-hydroxyacyl-[ACP] = a (2E)-enoyl-[ACP] + H2O</text>
        <dbReference type="Rhea" id="RHEA:13097"/>
        <dbReference type="Rhea" id="RHEA-COMP:9925"/>
        <dbReference type="Rhea" id="RHEA-COMP:9945"/>
        <dbReference type="ChEBI" id="CHEBI:15377"/>
        <dbReference type="ChEBI" id="CHEBI:78784"/>
        <dbReference type="ChEBI" id="CHEBI:78827"/>
        <dbReference type="EC" id="4.2.1.59"/>
    </reaction>
</comment>
<comment type="subunit">
    <text evidence="1">Oligomer.</text>
</comment>
<comment type="subcellular location">
    <subcellularLocation>
        <location evidence="1">Cytoplasm</location>
    </subcellularLocation>
</comment>
<comment type="PTM">
    <text evidence="1">The N-terminus is blocked.</text>
</comment>
<comment type="similarity">
    <text evidence="2">Belongs to the thioester dehydratase family. FabZ subfamily.</text>
</comment>
<protein>
    <recommendedName>
        <fullName>3-hydroxyacyl-[acyl-carrier-protein] dehydratase FabZ</fullName>
        <ecNumber>4.2.1.59</ecNumber>
    </recommendedName>
    <alternativeName>
        <fullName>(3R)-hydroxymyristoyl-[acyl-carrier-protein] dehydratase</fullName>
        <shortName>(3R)-hydroxymyristoyl-ACP dehydrase</shortName>
    </alternativeName>
    <alternativeName>
        <fullName>Beta-hydroxyacyl-ACP dehydratase</fullName>
    </alternativeName>
</protein>
<name>FABZ_SHIFL</name>